<name>CLPX_HAEIN</name>
<gene>
    <name evidence="1" type="primary">clpX</name>
    <name type="ordered locus">HI_0715</name>
</gene>
<protein>
    <recommendedName>
        <fullName evidence="1">ATP-dependent Clp protease ATP-binding subunit ClpX</fullName>
    </recommendedName>
</protein>
<comment type="function">
    <text evidence="1">ATP-dependent specificity component of the Clp protease. It directs the protease to specific substrates. Can perform chaperone functions in the absence of ClpP.</text>
</comment>
<comment type="subunit">
    <text evidence="1">Component of the ClpX-ClpP complex. Forms a hexameric ring that, in the presence of ATP, binds to fourteen ClpP subunits assembled into a disk-like structure with a central cavity, resembling the structure of eukaryotic proteasomes.</text>
</comment>
<comment type="similarity">
    <text evidence="1">Belongs to the ClpX chaperone family.</text>
</comment>
<feature type="chain" id="PRO_0000160363" description="ATP-dependent Clp protease ATP-binding subunit ClpX">
    <location>
        <begin position="1"/>
        <end position="411"/>
    </location>
</feature>
<feature type="domain" description="ClpX-type ZB" evidence="2">
    <location>
        <begin position="1"/>
        <end position="51"/>
    </location>
</feature>
<feature type="binding site" evidence="2">
    <location>
        <position position="10"/>
    </location>
    <ligand>
        <name>Zn(2+)</name>
        <dbReference type="ChEBI" id="CHEBI:29105"/>
    </ligand>
</feature>
<feature type="binding site" evidence="2">
    <location>
        <position position="13"/>
    </location>
    <ligand>
        <name>Zn(2+)</name>
        <dbReference type="ChEBI" id="CHEBI:29105"/>
    </ligand>
</feature>
<feature type="binding site" evidence="2">
    <location>
        <position position="32"/>
    </location>
    <ligand>
        <name>Zn(2+)</name>
        <dbReference type="ChEBI" id="CHEBI:29105"/>
    </ligand>
</feature>
<feature type="binding site" evidence="2">
    <location>
        <position position="35"/>
    </location>
    <ligand>
        <name>Zn(2+)</name>
        <dbReference type="ChEBI" id="CHEBI:29105"/>
    </ligand>
</feature>
<feature type="binding site" evidence="1">
    <location>
        <begin position="118"/>
        <end position="125"/>
    </location>
    <ligand>
        <name>ATP</name>
        <dbReference type="ChEBI" id="CHEBI:30616"/>
    </ligand>
</feature>
<dbReference type="EMBL" id="L42023">
    <property type="protein sequence ID" value="AAC22372.1"/>
    <property type="molecule type" value="Genomic_DNA"/>
</dbReference>
<dbReference type="PIR" id="E64088">
    <property type="entry name" value="E64088"/>
</dbReference>
<dbReference type="RefSeq" id="NP_438873.1">
    <property type="nucleotide sequence ID" value="NC_000907.1"/>
</dbReference>
<dbReference type="SMR" id="P44838"/>
<dbReference type="STRING" id="71421.HI_0715"/>
<dbReference type="MEROPS" id="X20.004"/>
<dbReference type="EnsemblBacteria" id="AAC22372">
    <property type="protein sequence ID" value="AAC22372"/>
    <property type="gene ID" value="HI_0715"/>
</dbReference>
<dbReference type="KEGG" id="hin:HI_0715"/>
<dbReference type="PATRIC" id="fig|71421.8.peg.747"/>
<dbReference type="eggNOG" id="COG1219">
    <property type="taxonomic scope" value="Bacteria"/>
</dbReference>
<dbReference type="HOGENOM" id="CLU_014218_8_2_6"/>
<dbReference type="OrthoDB" id="9804062at2"/>
<dbReference type="PhylomeDB" id="P44838"/>
<dbReference type="BioCyc" id="HINF71421:G1GJ1-749-MONOMER"/>
<dbReference type="Proteomes" id="UP000000579">
    <property type="component" value="Chromosome"/>
</dbReference>
<dbReference type="GO" id="GO:0009376">
    <property type="term" value="C:HslUV protease complex"/>
    <property type="evidence" value="ECO:0000318"/>
    <property type="project" value="GO_Central"/>
</dbReference>
<dbReference type="GO" id="GO:0005524">
    <property type="term" value="F:ATP binding"/>
    <property type="evidence" value="ECO:0000318"/>
    <property type="project" value="GO_Central"/>
</dbReference>
<dbReference type="GO" id="GO:0016887">
    <property type="term" value="F:ATP hydrolysis activity"/>
    <property type="evidence" value="ECO:0000318"/>
    <property type="project" value="GO_Central"/>
</dbReference>
<dbReference type="GO" id="GO:0140662">
    <property type="term" value="F:ATP-dependent protein folding chaperone"/>
    <property type="evidence" value="ECO:0007669"/>
    <property type="project" value="InterPro"/>
</dbReference>
<dbReference type="GO" id="GO:0046983">
    <property type="term" value="F:protein dimerization activity"/>
    <property type="evidence" value="ECO:0007669"/>
    <property type="project" value="InterPro"/>
</dbReference>
<dbReference type="GO" id="GO:0051082">
    <property type="term" value="F:unfolded protein binding"/>
    <property type="evidence" value="ECO:0007669"/>
    <property type="project" value="UniProtKB-UniRule"/>
</dbReference>
<dbReference type="GO" id="GO:0008270">
    <property type="term" value="F:zinc ion binding"/>
    <property type="evidence" value="ECO:0007669"/>
    <property type="project" value="InterPro"/>
</dbReference>
<dbReference type="GO" id="GO:0051301">
    <property type="term" value="P:cell division"/>
    <property type="evidence" value="ECO:0000318"/>
    <property type="project" value="GO_Central"/>
</dbReference>
<dbReference type="GO" id="GO:0051603">
    <property type="term" value="P:proteolysis involved in protein catabolic process"/>
    <property type="evidence" value="ECO:0000318"/>
    <property type="project" value="GO_Central"/>
</dbReference>
<dbReference type="CDD" id="cd19497">
    <property type="entry name" value="RecA-like_ClpX"/>
    <property type="match status" value="1"/>
</dbReference>
<dbReference type="FunFam" id="1.10.8.60:FF:000002">
    <property type="entry name" value="ATP-dependent Clp protease ATP-binding subunit ClpX"/>
    <property type="match status" value="1"/>
</dbReference>
<dbReference type="FunFam" id="3.40.50.300:FF:000005">
    <property type="entry name" value="ATP-dependent Clp protease ATP-binding subunit ClpX"/>
    <property type="match status" value="1"/>
</dbReference>
<dbReference type="Gene3D" id="1.10.8.60">
    <property type="match status" value="1"/>
</dbReference>
<dbReference type="Gene3D" id="6.20.220.10">
    <property type="entry name" value="ClpX chaperone, C4-type zinc finger domain"/>
    <property type="match status" value="1"/>
</dbReference>
<dbReference type="Gene3D" id="3.40.50.300">
    <property type="entry name" value="P-loop containing nucleotide triphosphate hydrolases"/>
    <property type="match status" value="1"/>
</dbReference>
<dbReference type="HAMAP" id="MF_00175">
    <property type="entry name" value="ClpX"/>
    <property type="match status" value="1"/>
</dbReference>
<dbReference type="InterPro" id="IPR003593">
    <property type="entry name" value="AAA+_ATPase"/>
</dbReference>
<dbReference type="InterPro" id="IPR050052">
    <property type="entry name" value="ATP-dep_Clp_protease_ClpX"/>
</dbReference>
<dbReference type="InterPro" id="IPR003959">
    <property type="entry name" value="ATPase_AAA_core"/>
</dbReference>
<dbReference type="InterPro" id="IPR019489">
    <property type="entry name" value="Clp_ATPase_C"/>
</dbReference>
<dbReference type="InterPro" id="IPR004487">
    <property type="entry name" value="Clp_protease_ATP-bd_su_ClpX"/>
</dbReference>
<dbReference type="InterPro" id="IPR046425">
    <property type="entry name" value="ClpX_bact"/>
</dbReference>
<dbReference type="InterPro" id="IPR027417">
    <property type="entry name" value="P-loop_NTPase"/>
</dbReference>
<dbReference type="InterPro" id="IPR010603">
    <property type="entry name" value="Znf_CppX_C4"/>
</dbReference>
<dbReference type="InterPro" id="IPR038366">
    <property type="entry name" value="Znf_CppX_C4_sf"/>
</dbReference>
<dbReference type="NCBIfam" id="TIGR00382">
    <property type="entry name" value="clpX"/>
    <property type="match status" value="1"/>
</dbReference>
<dbReference type="NCBIfam" id="NF003745">
    <property type="entry name" value="PRK05342.1"/>
    <property type="match status" value="1"/>
</dbReference>
<dbReference type="PANTHER" id="PTHR48102:SF7">
    <property type="entry name" value="ATP-DEPENDENT CLP PROTEASE ATP-BINDING SUBUNIT CLPX-LIKE, MITOCHONDRIAL"/>
    <property type="match status" value="1"/>
</dbReference>
<dbReference type="PANTHER" id="PTHR48102">
    <property type="entry name" value="ATP-DEPENDENT CLP PROTEASE ATP-BINDING SUBUNIT CLPX-LIKE, MITOCHONDRIAL-RELATED"/>
    <property type="match status" value="1"/>
</dbReference>
<dbReference type="Pfam" id="PF07724">
    <property type="entry name" value="AAA_2"/>
    <property type="match status" value="1"/>
</dbReference>
<dbReference type="Pfam" id="PF10431">
    <property type="entry name" value="ClpB_D2-small"/>
    <property type="match status" value="1"/>
</dbReference>
<dbReference type="Pfam" id="PF06689">
    <property type="entry name" value="zf-C4_ClpX"/>
    <property type="match status" value="1"/>
</dbReference>
<dbReference type="SMART" id="SM00382">
    <property type="entry name" value="AAA"/>
    <property type="match status" value="1"/>
</dbReference>
<dbReference type="SMART" id="SM01086">
    <property type="entry name" value="ClpB_D2-small"/>
    <property type="match status" value="1"/>
</dbReference>
<dbReference type="SMART" id="SM00994">
    <property type="entry name" value="zf-C4_ClpX"/>
    <property type="match status" value="1"/>
</dbReference>
<dbReference type="SUPFAM" id="SSF57716">
    <property type="entry name" value="Glucocorticoid receptor-like (DNA-binding domain)"/>
    <property type="match status" value="1"/>
</dbReference>
<dbReference type="SUPFAM" id="SSF52540">
    <property type="entry name" value="P-loop containing nucleoside triphosphate hydrolases"/>
    <property type="match status" value="1"/>
</dbReference>
<dbReference type="PROSITE" id="PS51902">
    <property type="entry name" value="CLPX_ZB"/>
    <property type="match status" value="1"/>
</dbReference>
<proteinExistence type="inferred from homology"/>
<sequence>MTDKDKDLHCSFCGKEKGEVDRLIAGTDGYICNECIELCHSMLEESHDKNLEESAVENEEKLPTPHEIRAHLDDYVIGQDYAKKVLSVAVYNHYKRLRTNYESNDVELGKSNILLIGPTGSGKTLLAQTLARRLNVPFAMADATTLTEAGYVGEDVENVLQKLLQNCEYDTEKAEKGIIYIDEIDKISRKSEGASITRDVSGEGVQQALLKLIEGTIASIPPQGGRKHPQQEMVKLDTSKILFICGGAFAGLDKIIDKRTQTSTSIGFNAKVEKDEKQQSLSELFRQVEPDDLMKFGLIPEFIGRLPMIAPLSELDEDALIQILTKPKNALIKQYQALFGLEKVELDFTPEALKAMAKKALERKTGARGLRSIVEAVLLDTMYDLPSLENLQKVIVDESTIVDNLAPKLEY</sequence>
<keyword id="KW-0067">ATP-binding</keyword>
<keyword id="KW-0143">Chaperone</keyword>
<keyword id="KW-0479">Metal-binding</keyword>
<keyword id="KW-0547">Nucleotide-binding</keyword>
<keyword id="KW-1185">Reference proteome</keyword>
<keyword id="KW-0862">Zinc</keyword>
<accession>P44838</accession>
<evidence type="ECO:0000255" key="1">
    <source>
        <dbReference type="HAMAP-Rule" id="MF_00175"/>
    </source>
</evidence>
<evidence type="ECO:0000255" key="2">
    <source>
        <dbReference type="PROSITE-ProRule" id="PRU01250"/>
    </source>
</evidence>
<organism>
    <name type="scientific">Haemophilus influenzae (strain ATCC 51907 / DSM 11121 / KW20 / Rd)</name>
    <dbReference type="NCBI Taxonomy" id="71421"/>
    <lineage>
        <taxon>Bacteria</taxon>
        <taxon>Pseudomonadati</taxon>
        <taxon>Pseudomonadota</taxon>
        <taxon>Gammaproteobacteria</taxon>
        <taxon>Pasteurellales</taxon>
        <taxon>Pasteurellaceae</taxon>
        <taxon>Haemophilus</taxon>
    </lineage>
</organism>
<reference key="1">
    <citation type="journal article" date="1995" name="Science">
        <title>Whole-genome random sequencing and assembly of Haemophilus influenzae Rd.</title>
        <authorList>
            <person name="Fleischmann R.D."/>
            <person name="Adams M.D."/>
            <person name="White O."/>
            <person name="Clayton R.A."/>
            <person name="Kirkness E.F."/>
            <person name="Kerlavage A.R."/>
            <person name="Bult C.J."/>
            <person name="Tomb J.-F."/>
            <person name="Dougherty B.A."/>
            <person name="Merrick J.M."/>
            <person name="McKenney K."/>
            <person name="Sutton G.G."/>
            <person name="FitzHugh W."/>
            <person name="Fields C.A."/>
            <person name="Gocayne J.D."/>
            <person name="Scott J.D."/>
            <person name="Shirley R."/>
            <person name="Liu L.-I."/>
            <person name="Glodek A."/>
            <person name="Kelley J.M."/>
            <person name="Weidman J.F."/>
            <person name="Phillips C.A."/>
            <person name="Spriggs T."/>
            <person name="Hedblom E."/>
            <person name="Cotton M.D."/>
            <person name="Utterback T.R."/>
            <person name="Hanna M.C."/>
            <person name="Nguyen D.T."/>
            <person name="Saudek D.M."/>
            <person name="Brandon R.C."/>
            <person name="Fine L.D."/>
            <person name="Fritchman J.L."/>
            <person name="Fuhrmann J.L."/>
            <person name="Geoghagen N.S.M."/>
            <person name="Gnehm C.L."/>
            <person name="McDonald L.A."/>
            <person name="Small K.V."/>
            <person name="Fraser C.M."/>
            <person name="Smith H.O."/>
            <person name="Venter J.C."/>
        </authorList>
    </citation>
    <scope>NUCLEOTIDE SEQUENCE [LARGE SCALE GENOMIC DNA]</scope>
    <source>
        <strain>ATCC 51907 / DSM 11121 / KW20 / Rd</strain>
    </source>
</reference>